<accession>P09154</accession>
<accession>P75984</accession>
<accession>Q2MBH5</accession>
<accession>Q47492</accession>
<evidence type="ECO:0000305" key="1"/>
<keyword id="KW-1185">Reference proteome</keyword>
<feature type="chain" id="PRO_0000168850" description="Uncharacterized protein YmfS">
    <location>
        <begin position="1"/>
        <end position="137"/>
    </location>
</feature>
<feature type="sequence conflict" description="In Ref. 1; CAA25947." evidence="1" ref="1">
    <original>V</original>
    <variation>M</variation>
    <location>
        <position position="44"/>
    </location>
</feature>
<feature type="sequence conflict" description="In Ref. 1; CAA25947." evidence="1" ref="1">
    <original>A</original>
    <variation>R</variation>
    <location>
        <position position="66"/>
    </location>
</feature>
<proteinExistence type="predicted"/>
<gene>
    <name type="primary">ymfS</name>
    <name type="ordered locus">b1155</name>
    <name type="ordered locus">JW5171</name>
</gene>
<name>YMFS_ECOLI</name>
<organism>
    <name type="scientific">Escherichia coli (strain K12)</name>
    <dbReference type="NCBI Taxonomy" id="83333"/>
    <lineage>
        <taxon>Bacteria</taxon>
        <taxon>Pseudomonadati</taxon>
        <taxon>Pseudomonadota</taxon>
        <taxon>Gammaproteobacteria</taxon>
        <taxon>Enterobacterales</taxon>
        <taxon>Enterobacteriaceae</taxon>
        <taxon>Escherichia</taxon>
    </lineage>
</organism>
<sequence>MKIYCCLNTVGFFMDGCGVIPPDSKEITAEHWQSLLKSQAEGGVIDFSVFPPSIKEVIRTHDDEVADANFQKQMLISDATDFINSRQWQGKAALGRLKEDELKQYNLWLDYLEALELVDTSSAPDIEWPTPPAVQAR</sequence>
<comment type="similarity">
    <text evidence="1">To E.coli YfdK.</text>
</comment>
<comment type="sequence caution" evidence="1">
    <conflict type="frameshift">
        <sequence resource="EMBL-CDS" id="CAA25947"/>
    </conflict>
</comment>
<protein>
    <recommendedName>
        <fullName>Uncharacterized protein YmfS</fullName>
    </recommendedName>
</protein>
<reference key="1">
    <citation type="journal article" date="1985" name="EMBO J.">
        <title>The invertible P-DNA segment in the chromosome of Escherichia coli.</title>
        <authorList>
            <person name="Plasterk R.H.A."/>
            <person name="van de Putte P."/>
        </authorList>
    </citation>
    <scope>NUCLEOTIDE SEQUENCE [GENOMIC DNA]</scope>
    <source>
        <strain>K12</strain>
    </source>
</reference>
<reference key="2">
    <citation type="journal article" date="1997" name="Science">
        <title>The complete genome sequence of Escherichia coli K-12.</title>
        <authorList>
            <person name="Blattner F.R."/>
            <person name="Plunkett G. III"/>
            <person name="Bloch C.A."/>
            <person name="Perna N.T."/>
            <person name="Burland V."/>
            <person name="Riley M."/>
            <person name="Collado-Vides J."/>
            <person name="Glasner J.D."/>
            <person name="Rode C.K."/>
            <person name="Mayhew G.F."/>
            <person name="Gregor J."/>
            <person name="Davis N.W."/>
            <person name="Kirkpatrick H.A."/>
            <person name="Goeden M.A."/>
            <person name="Rose D.J."/>
            <person name="Mau B."/>
            <person name="Shao Y."/>
        </authorList>
    </citation>
    <scope>NUCLEOTIDE SEQUENCE [LARGE SCALE GENOMIC DNA]</scope>
    <source>
        <strain>K12 / MG1655 / ATCC 47076</strain>
    </source>
</reference>
<reference key="3">
    <citation type="journal article" date="2006" name="Mol. Syst. Biol.">
        <title>Highly accurate genome sequences of Escherichia coli K-12 strains MG1655 and W3110.</title>
        <authorList>
            <person name="Hayashi K."/>
            <person name="Morooka N."/>
            <person name="Yamamoto Y."/>
            <person name="Fujita K."/>
            <person name="Isono K."/>
            <person name="Choi S."/>
            <person name="Ohtsubo E."/>
            <person name="Baba T."/>
            <person name="Wanner B.L."/>
            <person name="Mori H."/>
            <person name="Horiuchi T."/>
        </authorList>
    </citation>
    <scope>NUCLEOTIDE SEQUENCE [LARGE SCALE GENOMIC DNA]</scope>
    <source>
        <strain>K12 / W3110 / ATCC 27325 / DSM 5911</strain>
    </source>
</reference>
<dbReference type="EMBL" id="X01805">
    <property type="protein sequence ID" value="CAA25947.1"/>
    <property type="status" value="ALT_FRAME"/>
    <property type="molecule type" value="Genomic_DNA"/>
</dbReference>
<dbReference type="EMBL" id="U00096">
    <property type="protein sequence ID" value="AAC74239.1"/>
    <property type="molecule type" value="Genomic_DNA"/>
</dbReference>
<dbReference type="EMBL" id="AP009048">
    <property type="protein sequence ID" value="BAE76381.1"/>
    <property type="molecule type" value="Genomic_DNA"/>
</dbReference>
<dbReference type="PIR" id="H64860">
    <property type="entry name" value="H64860"/>
</dbReference>
<dbReference type="PIR" id="S07957">
    <property type="entry name" value="S07957"/>
</dbReference>
<dbReference type="RefSeq" id="NP_415673.1">
    <property type="nucleotide sequence ID" value="NC_000913.3"/>
</dbReference>
<dbReference type="RefSeq" id="WP_010723096.1">
    <property type="nucleotide sequence ID" value="NZ_CP064683.1"/>
</dbReference>
<dbReference type="SMR" id="P09154"/>
<dbReference type="BioGRID" id="4262865">
    <property type="interactions" value="9"/>
</dbReference>
<dbReference type="DIP" id="DIP-12729N"/>
<dbReference type="FunCoup" id="P09154">
    <property type="interactions" value="214"/>
</dbReference>
<dbReference type="STRING" id="511145.b1155"/>
<dbReference type="PaxDb" id="511145-b1155"/>
<dbReference type="EnsemblBacteria" id="AAC74239">
    <property type="protein sequence ID" value="AAC74239"/>
    <property type="gene ID" value="b1155"/>
</dbReference>
<dbReference type="GeneID" id="945724"/>
<dbReference type="KEGG" id="ecj:JW5171"/>
<dbReference type="KEGG" id="eco:b1155"/>
<dbReference type="PATRIC" id="fig|511145.12.peg.1196"/>
<dbReference type="EchoBASE" id="EB4083"/>
<dbReference type="eggNOG" id="ENOG5031251">
    <property type="taxonomic scope" value="Bacteria"/>
</dbReference>
<dbReference type="HOGENOM" id="CLU_094206_4_2_6"/>
<dbReference type="InParanoid" id="P09154"/>
<dbReference type="PhylomeDB" id="P09154"/>
<dbReference type="BioCyc" id="EcoCyc:G6598-MONOMER"/>
<dbReference type="PRO" id="PR:P09154"/>
<dbReference type="Proteomes" id="UP000000625">
    <property type="component" value="Chromosome"/>
</dbReference>
<dbReference type="InterPro" id="IPR003458">
    <property type="entry name" value="Phage_T4_Gp38_tail_assem"/>
</dbReference>
<dbReference type="InterPro" id="IPR051220">
    <property type="entry name" value="TFA_Chaperone"/>
</dbReference>
<dbReference type="PANTHER" id="PTHR34413:SF1">
    <property type="entry name" value="CYTOPLASMIC PROTEIN"/>
    <property type="match status" value="1"/>
</dbReference>
<dbReference type="PANTHER" id="PTHR34413">
    <property type="entry name" value="PROPHAGE TAIL FIBER ASSEMBLY PROTEIN HOMOLOG TFAE-RELATED-RELATED"/>
    <property type="match status" value="1"/>
</dbReference>
<dbReference type="Pfam" id="PF02413">
    <property type="entry name" value="Caudo_TAP"/>
    <property type="match status" value="1"/>
</dbReference>